<protein>
    <recommendedName>
        <fullName evidence="1">Large ribosomal subunit protein uL3</fullName>
    </recommendedName>
    <alternativeName>
        <fullName evidence="2">50S ribosomal protein L3</fullName>
    </alternativeName>
</protein>
<gene>
    <name evidence="1" type="primary">rplC</name>
    <name type="ordered locus">Ecok1_33030</name>
    <name type="ORF">APECO1_3131</name>
</gene>
<reference key="1">
    <citation type="journal article" date="2007" name="J. Bacteriol.">
        <title>The genome sequence of avian pathogenic Escherichia coli strain O1:K1:H7 shares strong similarities with human extraintestinal pathogenic E. coli genomes.</title>
        <authorList>
            <person name="Johnson T.J."/>
            <person name="Kariyawasam S."/>
            <person name="Wannemuehler Y."/>
            <person name="Mangiamele P."/>
            <person name="Johnson S.J."/>
            <person name="Doetkott C."/>
            <person name="Skyberg J.A."/>
            <person name="Lynne A.M."/>
            <person name="Johnson J.R."/>
            <person name="Nolan L.K."/>
        </authorList>
    </citation>
    <scope>NUCLEOTIDE SEQUENCE [LARGE SCALE GENOMIC DNA]</scope>
</reference>
<proteinExistence type="inferred from homology"/>
<feature type="chain" id="PRO_1000052043" description="Large ribosomal subunit protein uL3">
    <location>
        <begin position="1"/>
        <end position="209"/>
    </location>
</feature>
<feature type="modified residue" description="N5-methylglutamine" evidence="1">
    <location>
        <position position="150"/>
    </location>
</feature>
<keyword id="KW-0488">Methylation</keyword>
<keyword id="KW-1185">Reference proteome</keyword>
<keyword id="KW-0687">Ribonucleoprotein</keyword>
<keyword id="KW-0689">Ribosomal protein</keyword>
<keyword id="KW-0694">RNA-binding</keyword>
<keyword id="KW-0699">rRNA-binding</keyword>
<sequence>MIGLVGKKVGMTRIFTEDGVSIPVTVIEVEANRVTQVKDLANDGYRAIQVTTGAKKANRVTKPEAGHFAKAGVEAGRGLWEFRLAEGEEFTVGQSISVELFADVKKVDVTGTSKGKGFAGTVKRWNFRTQDATHGNSLSHRVPGSIGQNQTPGKVFKGKKMAGQMGNERVTVQSLDVVRVDAERNLLLVKGAVPGATGSDLIVKPAVKA</sequence>
<organism>
    <name type="scientific">Escherichia coli O1:K1 / APEC</name>
    <dbReference type="NCBI Taxonomy" id="405955"/>
    <lineage>
        <taxon>Bacteria</taxon>
        <taxon>Pseudomonadati</taxon>
        <taxon>Pseudomonadota</taxon>
        <taxon>Gammaproteobacteria</taxon>
        <taxon>Enterobacterales</taxon>
        <taxon>Enterobacteriaceae</taxon>
        <taxon>Escherichia</taxon>
    </lineage>
</organism>
<accession>A1AGK7</accession>
<name>RL3_ECOK1</name>
<comment type="function">
    <text evidence="1">One of the primary rRNA binding proteins, it binds directly near the 3'-end of the 23S rRNA, where it nucleates assembly of the 50S subunit.</text>
</comment>
<comment type="subunit">
    <text evidence="1">Part of the 50S ribosomal subunit. Forms a cluster with proteins L14 and L19.</text>
</comment>
<comment type="PTM">
    <text evidence="1">Methylated by PrmB.</text>
</comment>
<comment type="similarity">
    <text evidence="1">Belongs to the universal ribosomal protein uL3 family.</text>
</comment>
<dbReference type="EMBL" id="CP000468">
    <property type="protein sequence ID" value="ABJ02797.1"/>
    <property type="molecule type" value="Genomic_DNA"/>
</dbReference>
<dbReference type="RefSeq" id="WP_000579833.1">
    <property type="nucleotide sequence ID" value="NZ_CADILS010000044.1"/>
</dbReference>
<dbReference type="SMR" id="A1AGK7"/>
<dbReference type="GeneID" id="86948184"/>
<dbReference type="KEGG" id="ecv:APECO1_3131"/>
<dbReference type="HOGENOM" id="CLU_044142_4_1_6"/>
<dbReference type="Proteomes" id="UP000008216">
    <property type="component" value="Chromosome"/>
</dbReference>
<dbReference type="GO" id="GO:0022625">
    <property type="term" value="C:cytosolic large ribosomal subunit"/>
    <property type="evidence" value="ECO:0007669"/>
    <property type="project" value="TreeGrafter"/>
</dbReference>
<dbReference type="GO" id="GO:0019843">
    <property type="term" value="F:rRNA binding"/>
    <property type="evidence" value="ECO:0007669"/>
    <property type="project" value="UniProtKB-UniRule"/>
</dbReference>
<dbReference type="GO" id="GO:0003735">
    <property type="term" value="F:structural constituent of ribosome"/>
    <property type="evidence" value="ECO:0007669"/>
    <property type="project" value="InterPro"/>
</dbReference>
<dbReference type="GO" id="GO:0006412">
    <property type="term" value="P:translation"/>
    <property type="evidence" value="ECO:0007669"/>
    <property type="project" value="UniProtKB-UniRule"/>
</dbReference>
<dbReference type="FunFam" id="2.40.30.10:FF:000004">
    <property type="entry name" value="50S ribosomal protein L3"/>
    <property type="match status" value="1"/>
</dbReference>
<dbReference type="FunFam" id="3.30.160.810:FF:000001">
    <property type="entry name" value="50S ribosomal protein L3"/>
    <property type="match status" value="1"/>
</dbReference>
<dbReference type="Gene3D" id="3.30.160.810">
    <property type="match status" value="1"/>
</dbReference>
<dbReference type="Gene3D" id="2.40.30.10">
    <property type="entry name" value="Translation factors"/>
    <property type="match status" value="1"/>
</dbReference>
<dbReference type="HAMAP" id="MF_01325_B">
    <property type="entry name" value="Ribosomal_uL3_B"/>
    <property type="match status" value="1"/>
</dbReference>
<dbReference type="InterPro" id="IPR000597">
    <property type="entry name" value="Ribosomal_uL3"/>
</dbReference>
<dbReference type="InterPro" id="IPR019927">
    <property type="entry name" value="Ribosomal_uL3_bac/org-type"/>
</dbReference>
<dbReference type="InterPro" id="IPR019926">
    <property type="entry name" value="Ribosomal_uL3_CS"/>
</dbReference>
<dbReference type="InterPro" id="IPR009000">
    <property type="entry name" value="Transl_B-barrel_sf"/>
</dbReference>
<dbReference type="NCBIfam" id="TIGR03625">
    <property type="entry name" value="L3_bact"/>
    <property type="match status" value="1"/>
</dbReference>
<dbReference type="PANTHER" id="PTHR11229">
    <property type="entry name" value="50S RIBOSOMAL PROTEIN L3"/>
    <property type="match status" value="1"/>
</dbReference>
<dbReference type="PANTHER" id="PTHR11229:SF16">
    <property type="entry name" value="LARGE RIBOSOMAL SUBUNIT PROTEIN UL3C"/>
    <property type="match status" value="1"/>
</dbReference>
<dbReference type="Pfam" id="PF00297">
    <property type="entry name" value="Ribosomal_L3"/>
    <property type="match status" value="1"/>
</dbReference>
<dbReference type="SUPFAM" id="SSF50447">
    <property type="entry name" value="Translation proteins"/>
    <property type="match status" value="1"/>
</dbReference>
<dbReference type="PROSITE" id="PS00474">
    <property type="entry name" value="RIBOSOMAL_L3"/>
    <property type="match status" value="1"/>
</dbReference>
<evidence type="ECO:0000255" key="1">
    <source>
        <dbReference type="HAMAP-Rule" id="MF_01325"/>
    </source>
</evidence>
<evidence type="ECO:0000305" key="2"/>